<keyword id="KW-0143">Chaperone</keyword>
<keyword id="KW-0963">Cytoplasm</keyword>
<keyword id="KW-0653">Protein transport</keyword>
<keyword id="KW-1185">Reference proteome</keyword>
<keyword id="KW-0811">Translocation</keyword>
<keyword id="KW-0813">Transport</keyword>
<feature type="chain" id="PRO_0000055389" description="Protein-export protein SecB">
    <location>
        <begin position="1"/>
        <end position="161"/>
    </location>
</feature>
<feature type="region of interest" description="Disordered" evidence="2">
    <location>
        <begin position="141"/>
        <end position="161"/>
    </location>
</feature>
<dbReference type="EMBL" id="AL954747">
    <property type="protein sequence ID" value="CAD86122.1"/>
    <property type="molecule type" value="Genomic_DNA"/>
</dbReference>
<dbReference type="RefSeq" id="WP_011112703.1">
    <property type="nucleotide sequence ID" value="NC_004757.1"/>
</dbReference>
<dbReference type="SMR" id="Q82SU4"/>
<dbReference type="STRING" id="228410.NE2210"/>
<dbReference type="GeneID" id="87105345"/>
<dbReference type="KEGG" id="neu:NE2210"/>
<dbReference type="eggNOG" id="COG1952">
    <property type="taxonomic scope" value="Bacteria"/>
</dbReference>
<dbReference type="HOGENOM" id="CLU_111574_1_0_4"/>
<dbReference type="OrthoDB" id="9795145at2"/>
<dbReference type="PhylomeDB" id="Q82SU4"/>
<dbReference type="Proteomes" id="UP000001416">
    <property type="component" value="Chromosome"/>
</dbReference>
<dbReference type="GO" id="GO:0005737">
    <property type="term" value="C:cytoplasm"/>
    <property type="evidence" value="ECO:0007669"/>
    <property type="project" value="UniProtKB-SubCell"/>
</dbReference>
<dbReference type="GO" id="GO:0051082">
    <property type="term" value="F:unfolded protein binding"/>
    <property type="evidence" value="ECO:0007669"/>
    <property type="project" value="InterPro"/>
</dbReference>
<dbReference type="GO" id="GO:0006457">
    <property type="term" value="P:protein folding"/>
    <property type="evidence" value="ECO:0007669"/>
    <property type="project" value="UniProtKB-UniRule"/>
</dbReference>
<dbReference type="GO" id="GO:0051262">
    <property type="term" value="P:protein tetramerization"/>
    <property type="evidence" value="ECO:0007669"/>
    <property type="project" value="InterPro"/>
</dbReference>
<dbReference type="GO" id="GO:0015031">
    <property type="term" value="P:protein transport"/>
    <property type="evidence" value="ECO:0007669"/>
    <property type="project" value="UniProtKB-UniRule"/>
</dbReference>
<dbReference type="Gene3D" id="3.10.420.10">
    <property type="entry name" value="SecB-like"/>
    <property type="match status" value="1"/>
</dbReference>
<dbReference type="HAMAP" id="MF_00821">
    <property type="entry name" value="SecB"/>
    <property type="match status" value="1"/>
</dbReference>
<dbReference type="InterPro" id="IPR003708">
    <property type="entry name" value="SecB"/>
</dbReference>
<dbReference type="InterPro" id="IPR035958">
    <property type="entry name" value="SecB-like_sf"/>
</dbReference>
<dbReference type="NCBIfam" id="NF004394">
    <property type="entry name" value="PRK05751.1-5"/>
    <property type="match status" value="1"/>
</dbReference>
<dbReference type="NCBIfam" id="TIGR00809">
    <property type="entry name" value="secB"/>
    <property type="match status" value="1"/>
</dbReference>
<dbReference type="PANTHER" id="PTHR36918">
    <property type="match status" value="1"/>
</dbReference>
<dbReference type="PANTHER" id="PTHR36918:SF1">
    <property type="entry name" value="PROTEIN-EXPORT PROTEIN SECB"/>
    <property type="match status" value="1"/>
</dbReference>
<dbReference type="Pfam" id="PF02556">
    <property type="entry name" value="SecB"/>
    <property type="match status" value="1"/>
</dbReference>
<dbReference type="PRINTS" id="PR01594">
    <property type="entry name" value="SECBCHAPRONE"/>
</dbReference>
<dbReference type="SUPFAM" id="SSF54611">
    <property type="entry name" value="SecB-like"/>
    <property type="match status" value="1"/>
</dbReference>
<sequence length="161" mass="18138">MTESQQQPVFVIEKIYVKDLSLEIPHAPRIFLEREAPEINFQLATSHNAVDGEIHEVVVTATVTARLKEKDQVMFLVEAHQTGIFRIGNVPGDEVEPVLSVLCPNILFPYLRETISDTVTRAGFPPVILNPVNFEAIYHQKKQQETAGEQPDQPADTITRH</sequence>
<protein>
    <recommendedName>
        <fullName evidence="1">Protein-export protein SecB</fullName>
    </recommendedName>
</protein>
<gene>
    <name evidence="1" type="primary">secB</name>
    <name type="ordered locus">NE2210</name>
</gene>
<comment type="function">
    <text evidence="1">One of the proteins required for the normal export of preproteins out of the cell cytoplasm. It is a molecular chaperone that binds to a subset of precursor proteins, maintaining them in a translocation-competent state. It also specifically binds to its receptor SecA.</text>
</comment>
<comment type="subunit">
    <text evidence="1">Homotetramer, a dimer of dimers. One homotetramer interacts with 1 SecA dimer.</text>
</comment>
<comment type="subcellular location">
    <subcellularLocation>
        <location evidence="1">Cytoplasm</location>
    </subcellularLocation>
</comment>
<comment type="similarity">
    <text evidence="1">Belongs to the SecB family.</text>
</comment>
<reference key="1">
    <citation type="journal article" date="2003" name="J. Bacteriol.">
        <title>Complete genome sequence of the ammonia-oxidizing bacterium and obligate chemolithoautotroph Nitrosomonas europaea.</title>
        <authorList>
            <person name="Chain P."/>
            <person name="Lamerdin J.E."/>
            <person name="Larimer F.W."/>
            <person name="Regala W."/>
            <person name="Lao V."/>
            <person name="Land M.L."/>
            <person name="Hauser L."/>
            <person name="Hooper A.B."/>
            <person name="Klotz M.G."/>
            <person name="Norton J."/>
            <person name="Sayavedra-Soto L.A."/>
            <person name="Arciero D.M."/>
            <person name="Hommes N.G."/>
            <person name="Whittaker M.M."/>
            <person name="Arp D.J."/>
        </authorList>
    </citation>
    <scope>NUCLEOTIDE SEQUENCE [LARGE SCALE GENOMIC DNA]</scope>
    <source>
        <strain>ATCC 19718 / CIP 103999 / KCTC 2705 / NBRC 14298</strain>
    </source>
</reference>
<accession>Q82SU4</accession>
<proteinExistence type="inferred from homology"/>
<evidence type="ECO:0000255" key="1">
    <source>
        <dbReference type="HAMAP-Rule" id="MF_00821"/>
    </source>
</evidence>
<evidence type="ECO:0000256" key="2">
    <source>
        <dbReference type="SAM" id="MobiDB-lite"/>
    </source>
</evidence>
<organism>
    <name type="scientific">Nitrosomonas europaea (strain ATCC 19718 / CIP 103999 / KCTC 2705 / NBRC 14298)</name>
    <dbReference type="NCBI Taxonomy" id="228410"/>
    <lineage>
        <taxon>Bacteria</taxon>
        <taxon>Pseudomonadati</taxon>
        <taxon>Pseudomonadota</taxon>
        <taxon>Betaproteobacteria</taxon>
        <taxon>Nitrosomonadales</taxon>
        <taxon>Nitrosomonadaceae</taxon>
        <taxon>Nitrosomonas</taxon>
    </lineage>
</organism>
<name>SECB_NITEU</name>